<feature type="chain" id="PRO_1000144283" description="Large ribosomal subunit protein uL14">
    <location>
        <begin position="1"/>
        <end position="122"/>
    </location>
</feature>
<organism>
    <name type="scientific">Helicobacter pylori (strain Shi470)</name>
    <dbReference type="NCBI Taxonomy" id="512562"/>
    <lineage>
        <taxon>Bacteria</taxon>
        <taxon>Pseudomonadati</taxon>
        <taxon>Campylobacterota</taxon>
        <taxon>Epsilonproteobacteria</taxon>
        <taxon>Campylobacterales</taxon>
        <taxon>Helicobacteraceae</taxon>
        <taxon>Helicobacter</taxon>
    </lineage>
</organism>
<proteinExistence type="inferred from homology"/>
<protein>
    <recommendedName>
        <fullName evidence="1">Large ribosomal subunit protein uL14</fullName>
    </recommendedName>
    <alternativeName>
        <fullName evidence="2">50S ribosomal protein L14</fullName>
    </alternativeName>
</protein>
<dbReference type="EMBL" id="CP001072">
    <property type="protein sequence ID" value="ACD48754.1"/>
    <property type="molecule type" value="Genomic_DNA"/>
</dbReference>
<dbReference type="RefSeq" id="WP_000616110.1">
    <property type="nucleotide sequence ID" value="NC_010698.2"/>
</dbReference>
<dbReference type="SMR" id="B2UV72"/>
<dbReference type="GeneID" id="31757675"/>
<dbReference type="KEGG" id="hps:HPSH_06770"/>
<dbReference type="HOGENOM" id="CLU_095071_2_1_7"/>
<dbReference type="GO" id="GO:0022625">
    <property type="term" value="C:cytosolic large ribosomal subunit"/>
    <property type="evidence" value="ECO:0007669"/>
    <property type="project" value="TreeGrafter"/>
</dbReference>
<dbReference type="GO" id="GO:0070180">
    <property type="term" value="F:large ribosomal subunit rRNA binding"/>
    <property type="evidence" value="ECO:0007669"/>
    <property type="project" value="TreeGrafter"/>
</dbReference>
<dbReference type="GO" id="GO:0003735">
    <property type="term" value="F:structural constituent of ribosome"/>
    <property type="evidence" value="ECO:0007669"/>
    <property type="project" value="InterPro"/>
</dbReference>
<dbReference type="GO" id="GO:0006412">
    <property type="term" value="P:translation"/>
    <property type="evidence" value="ECO:0007669"/>
    <property type="project" value="UniProtKB-UniRule"/>
</dbReference>
<dbReference type="CDD" id="cd00337">
    <property type="entry name" value="Ribosomal_uL14"/>
    <property type="match status" value="1"/>
</dbReference>
<dbReference type="FunFam" id="2.40.150.20:FF:000001">
    <property type="entry name" value="50S ribosomal protein L14"/>
    <property type="match status" value="1"/>
</dbReference>
<dbReference type="Gene3D" id="2.40.150.20">
    <property type="entry name" value="Ribosomal protein L14"/>
    <property type="match status" value="1"/>
</dbReference>
<dbReference type="HAMAP" id="MF_01367">
    <property type="entry name" value="Ribosomal_uL14"/>
    <property type="match status" value="1"/>
</dbReference>
<dbReference type="InterPro" id="IPR000218">
    <property type="entry name" value="Ribosomal_uL14"/>
</dbReference>
<dbReference type="InterPro" id="IPR005745">
    <property type="entry name" value="Ribosomal_uL14_bac-type"/>
</dbReference>
<dbReference type="InterPro" id="IPR019972">
    <property type="entry name" value="Ribosomal_uL14_CS"/>
</dbReference>
<dbReference type="InterPro" id="IPR036853">
    <property type="entry name" value="Ribosomal_uL14_sf"/>
</dbReference>
<dbReference type="NCBIfam" id="TIGR01067">
    <property type="entry name" value="rplN_bact"/>
    <property type="match status" value="1"/>
</dbReference>
<dbReference type="PANTHER" id="PTHR11761">
    <property type="entry name" value="50S/60S RIBOSOMAL PROTEIN L14/L23"/>
    <property type="match status" value="1"/>
</dbReference>
<dbReference type="PANTHER" id="PTHR11761:SF3">
    <property type="entry name" value="LARGE RIBOSOMAL SUBUNIT PROTEIN UL14M"/>
    <property type="match status" value="1"/>
</dbReference>
<dbReference type="Pfam" id="PF00238">
    <property type="entry name" value="Ribosomal_L14"/>
    <property type="match status" value="1"/>
</dbReference>
<dbReference type="SMART" id="SM01374">
    <property type="entry name" value="Ribosomal_L14"/>
    <property type="match status" value="1"/>
</dbReference>
<dbReference type="SUPFAM" id="SSF50193">
    <property type="entry name" value="Ribosomal protein L14"/>
    <property type="match status" value="1"/>
</dbReference>
<dbReference type="PROSITE" id="PS00049">
    <property type="entry name" value="RIBOSOMAL_L14"/>
    <property type="match status" value="1"/>
</dbReference>
<keyword id="KW-0687">Ribonucleoprotein</keyword>
<keyword id="KW-0689">Ribosomal protein</keyword>
<keyword id="KW-0694">RNA-binding</keyword>
<keyword id="KW-0699">rRNA-binding</keyword>
<reference key="1">
    <citation type="submission" date="2008-05" db="EMBL/GenBank/DDBJ databases">
        <title>Genome sequence of Helicobacter pylori from the remote Amazon: traces of Asian ancestry of the first Americans.</title>
        <authorList>
            <person name="Kersulyte D."/>
            <person name="Kalia A."/>
            <person name="Gilman R.H."/>
            <person name="Berg D.E."/>
        </authorList>
    </citation>
    <scope>NUCLEOTIDE SEQUENCE [LARGE SCALE GENOMIC DNA]</scope>
    <source>
        <strain>Shi470</strain>
    </source>
</reference>
<evidence type="ECO:0000255" key="1">
    <source>
        <dbReference type="HAMAP-Rule" id="MF_01367"/>
    </source>
</evidence>
<evidence type="ECO:0000305" key="2"/>
<gene>
    <name evidence="1" type="primary">rplN</name>
    <name type="ordered locus">HPSH_06770</name>
</gene>
<name>RL14_HELPS</name>
<accession>B2UV72</accession>
<sequence>MIQSFTRLNVADNSGAKEIMCIKVLGGSHKRYASVGSVIVASVKKAIPNGKVKRGQVVKAVVVRTKKEIQRKNGSLVRFDDNAAVILDAKKDPVGTRIFGPVSREVRYANFMKIISLAPEVV</sequence>
<comment type="function">
    <text evidence="1">Binds to 23S rRNA. Forms part of two intersubunit bridges in the 70S ribosome.</text>
</comment>
<comment type="subunit">
    <text evidence="1">Part of the 50S ribosomal subunit. Forms a cluster with proteins L3 and L19. In the 70S ribosome, L14 and L19 interact and together make contacts with the 16S rRNA in bridges B5 and B8.</text>
</comment>
<comment type="similarity">
    <text evidence="1">Belongs to the universal ribosomal protein uL14 family.</text>
</comment>